<proteinExistence type="inferred from homology"/>
<comment type="function">
    <text evidence="1">Catalyzes the phosphorolysis of diverse nucleosides, yielding D-ribose 1-phosphate and the respective free bases. Can use uridine, adenosine, guanosine, cytidine, thymidine, inosine and xanthosine as substrates. Also catalyzes the reverse reactions.</text>
</comment>
<comment type="catalytic activity">
    <reaction evidence="1">
        <text>a purine D-ribonucleoside + phosphate = a purine nucleobase + alpha-D-ribose 1-phosphate</text>
        <dbReference type="Rhea" id="RHEA:19805"/>
        <dbReference type="ChEBI" id="CHEBI:26386"/>
        <dbReference type="ChEBI" id="CHEBI:43474"/>
        <dbReference type="ChEBI" id="CHEBI:57720"/>
        <dbReference type="ChEBI" id="CHEBI:142355"/>
        <dbReference type="EC" id="2.4.2.1"/>
    </reaction>
</comment>
<comment type="catalytic activity">
    <reaction evidence="1">
        <text>adenosine + phosphate = alpha-D-ribose 1-phosphate + adenine</text>
        <dbReference type="Rhea" id="RHEA:27642"/>
        <dbReference type="ChEBI" id="CHEBI:16335"/>
        <dbReference type="ChEBI" id="CHEBI:16708"/>
        <dbReference type="ChEBI" id="CHEBI:43474"/>
        <dbReference type="ChEBI" id="CHEBI:57720"/>
        <dbReference type="EC" id="2.4.2.1"/>
    </reaction>
</comment>
<comment type="catalytic activity">
    <reaction evidence="1">
        <text>cytidine + phosphate = cytosine + alpha-D-ribose 1-phosphate</text>
        <dbReference type="Rhea" id="RHEA:52540"/>
        <dbReference type="ChEBI" id="CHEBI:16040"/>
        <dbReference type="ChEBI" id="CHEBI:17562"/>
        <dbReference type="ChEBI" id="CHEBI:43474"/>
        <dbReference type="ChEBI" id="CHEBI:57720"/>
        <dbReference type="EC" id="2.4.2.2"/>
    </reaction>
</comment>
<comment type="catalytic activity">
    <reaction evidence="1">
        <text>guanosine + phosphate = alpha-D-ribose 1-phosphate + guanine</text>
        <dbReference type="Rhea" id="RHEA:13233"/>
        <dbReference type="ChEBI" id="CHEBI:16235"/>
        <dbReference type="ChEBI" id="CHEBI:16750"/>
        <dbReference type="ChEBI" id="CHEBI:43474"/>
        <dbReference type="ChEBI" id="CHEBI:57720"/>
        <dbReference type="EC" id="2.4.2.1"/>
    </reaction>
</comment>
<comment type="catalytic activity">
    <reaction evidence="1">
        <text>inosine + phosphate = alpha-D-ribose 1-phosphate + hypoxanthine</text>
        <dbReference type="Rhea" id="RHEA:27646"/>
        <dbReference type="ChEBI" id="CHEBI:17368"/>
        <dbReference type="ChEBI" id="CHEBI:17596"/>
        <dbReference type="ChEBI" id="CHEBI:43474"/>
        <dbReference type="ChEBI" id="CHEBI:57720"/>
        <dbReference type="EC" id="2.4.2.1"/>
    </reaction>
</comment>
<comment type="catalytic activity">
    <reaction evidence="1">
        <text>thymidine + phosphate = 2-deoxy-alpha-D-ribose 1-phosphate + thymine</text>
        <dbReference type="Rhea" id="RHEA:16037"/>
        <dbReference type="ChEBI" id="CHEBI:17748"/>
        <dbReference type="ChEBI" id="CHEBI:17821"/>
        <dbReference type="ChEBI" id="CHEBI:43474"/>
        <dbReference type="ChEBI" id="CHEBI:57259"/>
        <dbReference type="EC" id="2.4.2.2"/>
    </reaction>
</comment>
<comment type="catalytic activity">
    <reaction evidence="1">
        <text>uridine + phosphate = alpha-D-ribose 1-phosphate + uracil</text>
        <dbReference type="Rhea" id="RHEA:24388"/>
        <dbReference type="ChEBI" id="CHEBI:16704"/>
        <dbReference type="ChEBI" id="CHEBI:17568"/>
        <dbReference type="ChEBI" id="CHEBI:43474"/>
        <dbReference type="ChEBI" id="CHEBI:57720"/>
        <dbReference type="EC" id="2.4.2.2"/>
    </reaction>
</comment>
<comment type="catalytic activity">
    <reaction evidence="1">
        <text>xanthosine + phosphate = alpha-D-ribose 1-phosphate + xanthine</text>
        <dbReference type="Rhea" id="RHEA:27638"/>
        <dbReference type="ChEBI" id="CHEBI:17712"/>
        <dbReference type="ChEBI" id="CHEBI:18107"/>
        <dbReference type="ChEBI" id="CHEBI:43474"/>
        <dbReference type="ChEBI" id="CHEBI:57720"/>
        <dbReference type="EC" id="2.4.2.1"/>
    </reaction>
</comment>
<comment type="similarity">
    <text evidence="1">Belongs to the nucleoside phosphorylase PpnP family.</text>
</comment>
<accession>A4W766</accession>
<reference key="1">
    <citation type="journal article" date="2010" name="PLoS Genet.">
        <title>Genome sequence of the plant growth promoting endophytic bacterium Enterobacter sp. 638.</title>
        <authorList>
            <person name="Taghavi S."/>
            <person name="van der Lelie D."/>
            <person name="Hoffman A."/>
            <person name="Zhang Y.B."/>
            <person name="Walla M.D."/>
            <person name="Vangronsveld J."/>
            <person name="Newman L."/>
            <person name="Monchy S."/>
        </authorList>
    </citation>
    <scope>NUCLEOTIDE SEQUENCE [LARGE SCALE GENOMIC DNA]</scope>
    <source>
        <strain>638</strain>
    </source>
</reference>
<sequence>MLQSNEYFSGKVKSIGFTSSSTGRASVGVMAEGEYTFGTAEPEEMTVISGALNVLLPGETEWKVYTAGQVFNVPGHSEFHLQVAEPTSYLCRYLK</sequence>
<gene>
    <name evidence="1" type="primary">ppnP</name>
    <name type="ordered locus">Ent638_0862</name>
</gene>
<organism>
    <name type="scientific">Enterobacter sp. (strain 638)</name>
    <dbReference type="NCBI Taxonomy" id="399742"/>
    <lineage>
        <taxon>Bacteria</taxon>
        <taxon>Pseudomonadati</taxon>
        <taxon>Pseudomonadota</taxon>
        <taxon>Gammaproteobacteria</taxon>
        <taxon>Enterobacterales</taxon>
        <taxon>Enterobacteriaceae</taxon>
        <taxon>Enterobacter</taxon>
    </lineage>
</organism>
<protein>
    <recommendedName>
        <fullName evidence="1">Pyrimidine/purine nucleoside phosphorylase</fullName>
        <ecNumber evidence="1">2.4.2.1</ecNumber>
        <ecNumber evidence="1">2.4.2.2</ecNumber>
    </recommendedName>
    <alternativeName>
        <fullName evidence="1">Adenosine phosphorylase</fullName>
    </alternativeName>
    <alternativeName>
        <fullName evidence="1">Cytidine phosphorylase</fullName>
    </alternativeName>
    <alternativeName>
        <fullName evidence="1">Guanosine phosphorylase</fullName>
    </alternativeName>
    <alternativeName>
        <fullName evidence="1">Inosine phosphorylase</fullName>
    </alternativeName>
    <alternativeName>
        <fullName evidence="1">Thymidine phosphorylase</fullName>
    </alternativeName>
    <alternativeName>
        <fullName evidence="1">Uridine phosphorylase</fullName>
    </alternativeName>
    <alternativeName>
        <fullName evidence="1">Xanthosine phosphorylase</fullName>
    </alternativeName>
</protein>
<evidence type="ECO:0000255" key="1">
    <source>
        <dbReference type="HAMAP-Rule" id="MF_01537"/>
    </source>
</evidence>
<dbReference type="EC" id="2.4.2.1" evidence="1"/>
<dbReference type="EC" id="2.4.2.2" evidence="1"/>
<dbReference type="EMBL" id="CP000653">
    <property type="protein sequence ID" value="ABP59546.1"/>
    <property type="molecule type" value="Genomic_DNA"/>
</dbReference>
<dbReference type="RefSeq" id="WP_012016267.1">
    <property type="nucleotide sequence ID" value="NC_009436.1"/>
</dbReference>
<dbReference type="SMR" id="A4W766"/>
<dbReference type="STRING" id="399742.Ent638_0862"/>
<dbReference type="KEGG" id="ent:Ent638_0862"/>
<dbReference type="eggNOG" id="COG3123">
    <property type="taxonomic scope" value="Bacteria"/>
</dbReference>
<dbReference type="HOGENOM" id="CLU_157874_0_0_6"/>
<dbReference type="OrthoDB" id="9793848at2"/>
<dbReference type="Proteomes" id="UP000000230">
    <property type="component" value="Chromosome"/>
</dbReference>
<dbReference type="GO" id="GO:0005829">
    <property type="term" value="C:cytosol"/>
    <property type="evidence" value="ECO:0007669"/>
    <property type="project" value="TreeGrafter"/>
</dbReference>
<dbReference type="GO" id="GO:0047975">
    <property type="term" value="F:guanosine phosphorylase activity"/>
    <property type="evidence" value="ECO:0007669"/>
    <property type="project" value="UniProtKB-EC"/>
</dbReference>
<dbReference type="GO" id="GO:0004731">
    <property type="term" value="F:purine-nucleoside phosphorylase activity"/>
    <property type="evidence" value="ECO:0007669"/>
    <property type="project" value="UniProtKB-UniRule"/>
</dbReference>
<dbReference type="GO" id="GO:0009032">
    <property type="term" value="F:thymidine phosphorylase activity"/>
    <property type="evidence" value="ECO:0007669"/>
    <property type="project" value="UniProtKB-EC"/>
</dbReference>
<dbReference type="GO" id="GO:0004850">
    <property type="term" value="F:uridine phosphorylase activity"/>
    <property type="evidence" value="ECO:0007669"/>
    <property type="project" value="UniProtKB-EC"/>
</dbReference>
<dbReference type="CDD" id="cd20296">
    <property type="entry name" value="cupin_PpnP-like"/>
    <property type="match status" value="1"/>
</dbReference>
<dbReference type="FunFam" id="2.60.120.10:FF:000016">
    <property type="entry name" value="Pyrimidine/purine nucleoside phosphorylase"/>
    <property type="match status" value="1"/>
</dbReference>
<dbReference type="Gene3D" id="2.60.120.10">
    <property type="entry name" value="Jelly Rolls"/>
    <property type="match status" value="1"/>
</dbReference>
<dbReference type="HAMAP" id="MF_01537">
    <property type="entry name" value="Nucleos_phosphorylase_PpnP"/>
    <property type="match status" value="1"/>
</dbReference>
<dbReference type="InterPro" id="IPR009664">
    <property type="entry name" value="Ppnp"/>
</dbReference>
<dbReference type="InterPro" id="IPR014710">
    <property type="entry name" value="RmlC-like_jellyroll"/>
</dbReference>
<dbReference type="InterPro" id="IPR011051">
    <property type="entry name" value="RmlC_Cupin_sf"/>
</dbReference>
<dbReference type="NCBIfam" id="NF007875">
    <property type="entry name" value="PRK10579.1"/>
    <property type="match status" value="1"/>
</dbReference>
<dbReference type="PANTHER" id="PTHR36540">
    <property type="entry name" value="PYRIMIDINE/PURINE NUCLEOSIDE PHOSPHORYLASE"/>
    <property type="match status" value="1"/>
</dbReference>
<dbReference type="PANTHER" id="PTHR36540:SF1">
    <property type="entry name" value="PYRIMIDINE_PURINE NUCLEOSIDE PHOSPHORYLASE"/>
    <property type="match status" value="1"/>
</dbReference>
<dbReference type="Pfam" id="PF06865">
    <property type="entry name" value="Ppnp"/>
    <property type="match status" value="1"/>
</dbReference>
<dbReference type="SUPFAM" id="SSF51182">
    <property type="entry name" value="RmlC-like cupins"/>
    <property type="match status" value="1"/>
</dbReference>
<name>PPNP_ENT38</name>
<feature type="chain" id="PRO_1000068729" description="Pyrimidine/purine nucleoside phosphorylase">
    <location>
        <begin position="1"/>
        <end position="95"/>
    </location>
</feature>
<keyword id="KW-0328">Glycosyltransferase</keyword>
<keyword id="KW-0808">Transferase</keyword>